<feature type="chain" id="PRO_0000196078" description="Segmentation polarity homeobox protein engrailed">
    <location>
        <begin position="1"/>
        <end position="584"/>
    </location>
</feature>
<feature type="DNA-binding region" description="Homeobox" evidence="1">
    <location>
        <begin position="486"/>
        <end position="545"/>
    </location>
</feature>
<feature type="region of interest" description="Disordered" evidence="2">
    <location>
        <begin position="1"/>
        <end position="27"/>
    </location>
</feature>
<feature type="region of interest" description="Disordered" evidence="2">
    <location>
        <begin position="141"/>
        <end position="198"/>
    </location>
</feature>
<feature type="region of interest" description="Disordered" evidence="2">
    <location>
        <begin position="343"/>
        <end position="380"/>
    </location>
</feature>
<feature type="region of interest" description="Disordered" evidence="2">
    <location>
        <begin position="392"/>
        <end position="451"/>
    </location>
</feature>
<feature type="region of interest" description="Disordered" evidence="2">
    <location>
        <begin position="465"/>
        <end position="492"/>
    </location>
</feature>
<feature type="compositionally biased region" description="Pro residues" evidence="2">
    <location>
        <begin position="12"/>
        <end position="23"/>
    </location>
</feature>
<feature type="compositionally biased region" description="Acidic residues" evidence="2">
    <location>
        <begin position="160"/>
        <end position="174"/>
    </location>
</feature>
<feature type="compositionally biased region" description="Polar residues" evidence="2">
    <location>
        <begin position="189"/>
        <end position="198"/>
    </location>
</feature>
<feature type="compositionally biased region" description="Low complexity" evidence="2">
    <location>
        <begin position="348"/>
        <end position="380"/>
    </location>
</feature>
<feature type="compositionally biased region" description="Low complexity" evidence="2">
    <location>
        <begin position="392"/>
        <end position="405"/>
    </location>
</feature>
<feature type="compositionally biased region" description="Basic and acidic residues" evidence="2">
    <location>
        <begin position="478"/>
        <end position="489"/>
    </location>
</feature>
<sequence>MALEDRCSPQSAPSPPGCLPHSPPQQHQHILQPNLRIHAIPISITALDMSLQPGTAATAATLYQQQQLQHLHQLQQLQQLHQQQLAASAGVFHHPSTSAAFDAAALHAAALQQRLSASGSPGAHSTGACSTPASTLTIKEEESDSILGDSFHNQTATTATEEDEEEDDDIDVDDTASVSGSARLPPPAHQQSKQSKPSLAFSISNILSDRFGDAAKQTKQGDSTGVSVSAAAAAASIFRPFEASRAAAATPSAFTRVDLLEFSRQQQAAAAAATAAMMLERANLLNCFNPAAYPRIHEELVQSRLRRSAAGNPNAVLPPTAKLTEPSVEKSALGSLCKTVSQIGQAQSTTPVTTPSSRPSQLASPPPASNASTISSSSSTAASCSASSSSGCSSAASSLNSSPSSRLAGANNASSPQPIPPPSAVSRDSGMESSDDTRSETGSTTTDGGKNEMWPAWVYCTRYSDRPSSGPRYRRPKQPKDKTNDEKRPRTAFSSEQLARLKREFNENRYLTERRRQQLSSELGLNEAQIKIWFQNKRAKIKKSTGSKNPLALQLMAQGLYNHTTVPLTKEEEELEMRMNGQIP</sequence>
<comment type="function">
    <text>This protein specifies the body segmentation pattern. It is required for the development of the central nervous system. Transcriptional regulator that repress activated promoters.</text>
</comment>
<comment type="subcellular location">
    <subcellularLocation>
        <location>Nucleus</location>
    </subcellularLocation>
</comment>
<comment type="similarity">
    <text evidence="3">Belongs to the engrailed homeobox family.</text>
</comment>
<gene>
    <name type="primary">en</name>
</gene>
<evidence type="ECO:0000255" key="1">
    <source>
        <dbReference type="PROSITE-ProRule" id="PRU00108"/>
    </source>
</evidence>
<evidence type="ECO:0000256" key="2">
    <source>
        <dbReference type="SAM" id="MobiDB-lite"/>
    </source>
</evidence>
<evidence type="ECO:0000305" key="3"/>
<keyword id="KW-0217">Developmental protein</keyword>
<keyword id="KW-0238">DNA-binding</keyword>
<keyword id="KW-0371">Homeobox</keyword>
<keyword id="KW-0539">Nucleus</keyword>
<keyword id="KW-0709">Segmentation polarity protein</keyword>
<reference key="1">
    <citation type="journal article" date="1986" name="EMBO J.">
        <title>Sequence conservation in the protein coding and intron regions of the engrailed transcription unit.</title>
        <authorList>
            <person name="Kassis J.A."/>
            <person name="Poole S.J."/>
            <person name="Wright D.K."/>
            <person name="O'Farrell P.H."/>
        </authorList>
    </citation>
    <scope>NUCLEOTIDE SEQUENCE [GENOMIC DNA]</scope>
</reference>
<protein>
    <recommendedName>
        <fullName>Segmentation polarity homeobox protein engrailed</fullName>
    </recommendedName>
</protein>
<organism>
    <name type="scientific">Drosophila virilis</name>
    <name type="common">Fruit fly</name>
    <dbReference type="NCBI Taxonomy" id="7244"/>
    <lineage>
        <taxon>Eukaryota</taxon>
        <taxon>Metazoa</taxon>
        <taxon>Ecdysozoa</taxon>
        <taxon>Arthropoda</taxon>
        <taxon>Hexapoda</taxon>
        <taxon>Insecta</taxon>
        <taxon>Pterygota</taxon>
        <taxon>Neoptera</taxon>
        <taxon>Endopterygota</taxon>
        <taxon>Diptera</taxon>
        <taxon>Brachycera</taxon>
        <taxon>Muscomorpha</taxon>
        <taxon>Ephydroidea</taxon>
        <taxon>Drosophilidae</taxon>
        <taxon>Drosophila</taxon>
    </lineage>
</organism>
<accession>P09145</accession>
<name>HMEN_DROVI</name>
<proteinExistence type="inferred from homology"/>
<dbReference type="EMBL" id="X04727">
    <property type="protein sequence ID" value="CAA28436.1"/>
    <property type="molecule type" value="Genomic_DNA"/>
</dbReference>
<dbReference type="PIR" id="B25682">
    <property type="entry name" value="B25682"/>
</dbReference>
<dbReference type="BMRB" id="P09145"/>
<dbReference type="SMR" id="P09145"/>
<dbReference type="eggNOG" id="KOG0493">
    <property type="taxonomic scope" value="Eukaryota"/>
</dbReference>
<dbReference type="OrthoDB" id="6159439at2759"/>
<dbReference type="GO" id="GO:0005634">
    <property type="term" value="C:nucleus"/>
    <property type="evidence" value="ECO:0007669"/>
    <property type="project" value="UniProtKB-SubCell"/>
</dbReference>
<dbReference type="GO" id="GO:0001227">
    <property type="term" value="F:DNA-binding transcription repressor activity, RNA polymerase II-specific"/>
    <property type="evidence" value="ECO:0007669"/>
    <property type="project" value="EnsemblMetazoa"/>
</dbReference>
<dbReference type="GO" id="GO:0000978">
    <property type="term" value="F:RNA polymerase II cis-regulatory region sequence-specific DNA binding"/>
    <property type="evidence" value="ECO:0007669"/>
    <property type="project" value="EnsemblMetazoa"/>
</dbReference>
<dbReference type="GO" id="GO:0007411">
    <property type="term" value="P:axon guidance"/>
    <property type="evidence" value="ECO:0007669"/>
    <property type="project" value="EnsemblMetazoa"/>
</dbReference>
<dbReference type="GO" id="GO:0035224">
    <property type="term" value="P:genital disc anterior/posterior pattern formation"/>
    <property type="evidence" value="ECO:0007669"/>
    <property type="project" value="EnsemblMetazoa"/>
</dbReference>
<dbReference type="GO" id="GO:0008406">
    <property type="term" value="P:gonad development"/>
    <property type="evidence" value="ECO:0007669"/>
    <property type="project" value="EnsemblMetazoa"/>
</dbReference>
<dbReference type="GO" id="GO:0007474">
    <property type="term" value="P:imaginal disc-derived wing vein specification"/>
    <property type="evidence" value="ECO:0007669"/>
    <property type="project" value="EnsemblMetazoa"/>
</dbReference>
<dbReference type="GO" id="GO:0010629">
    <property type="term" value="P:negative regulation of gene expression"/>
    <property type="evidence" value="ECO:0007669"/>
    <property type="project" value="EnsemblMetazoa"/>
</dbReference>
<dbReference type="GO" id="GO:0043524">
    <property type="term" value="P:negative regulation of neuron apoptotic process"/>
    <property type="evidence" value="ECO:0007669"/>
    <property type="project" value="EnsemblMetazoa"/>
</dbReference>
<dbReference type="GO" id="GO:0045944">
    <property type="term" value="P:positive regulation of transcription by RNA polymerase II"/>
    <property type="evidence" value="ECO:0007669"/>
    <property type="project" value="EnsemblMetazoa"/>
</dbReference>
<dbReference type="GO" id="GO:0007367">
    <property type="term" value="P:segment polarity determination"/>
    <property type="evidence" value="ECO:0007669"/>
    <property type="project" value="UniProtKB-KW"/>
</dbReference>
<dbReference type="GO" id="GO:0035277">
    <property type="term" value="P:spiracle morphogenesis, open tracheal system"/>
    <property type="evidence" value="ECO:0007669"/>
    <property type="project" value="EnsemblMetazoa"/>
</dbReference>
<dbReference type="GO" id="GO:0007418">
    <property type="term" value="P:ventral midline development"/>
    <property type="evidence" value="ECO:0007669"/>
    <property type="project" value="EnsemblMetazoa"/>
</dbReference>
<dbReference type="CDD" id="cd00086">
    <property type="entry name" value="homeodomain"/>
    <property type="match status" value="1"/>
</dbReference>
<dbReference type="FunFam" id="1.10.10.60:FF:000418">
    <property type="entry name" value="Homeobox protein engrailed-like"/>
    <property type="match status" value="1"/>
</dbReference>
<dbReference type="Gene3D" id="1.10.10.60">
    <property type="entry name" value="Homeodomain-like"/>
    <property type="match status" value="1"/>
</dbReference>
<dbReference type="InterPro" id="IPR050720">
    <property type="entry name" value="Engrailed_Homeobox_TFs"/>
</dbReference>
<dbReference type="InterPro" id="IPR001356">
    <property type="entry name" value="HD"/>
</dbReference>
<dbReference type="InterPro" id="IPR000747">
    <property type="entry name" value="HD_engrailed"/>
</dbReference>
<dbReference type="InterPro" id="IPR020479">
    <property type="entry name" value="HD_metazoa"/>
</dbReference>
<dbReference type="InterPro" id="IPR019549">
    <property type="entry name" value="Homeobox-engrailed_C-terminal"/>
</dbReference>
<dbReference type="InterPro" id="IPR019737">
    <property type="entry name" value="Homeobox-engrailed_CS"/>
</dbReference>
<dbReference type="InterPro" id="IPR017970">
    <property type="entry name" value="Homeobox_CS"/>
</dbReference>
<dbReference type="InterPro" id="IPR009057">
    <property type="entry name" value="Homeodomain-like_sf"/>
</dbReference>
<dbReference type="InterPro" id="IPR000047">
    <property type="entry name" value="HTH_motif"/>
</dbReference>
<dbReference type="PANTHER" id="PTHR24341">
    <property type="entry name" value="HOMEOBOX PROTEIN ENGRAILED"/>
    <property type="match status" value="1"/>
</dbReference>
<dbReference type="PANTHER" id="PTHR24341:SF9">
    <property type="entry name" value="SEGMENTATION POLARITY HOMEOBOX PROTEIN ENGRAILED"/>
    <property type="match status" value="1"/>
</dbReference>
<dbReference type="Pfam" id="PF10525">
    <property type="entry name" value="Engrail_1_C_sig"/>
    <property type="match status" value="1"/>
</dbReference>
<dbReference type="Pfam" id="PF00046">
    <property type="entry name" value="Homeodomain"/>
    <property type="match status" value="1"/>
</dbReference>
<dbReference type="PRINTS" id="PR00026">
    <property type="entry name" value="ENGRAILED"/>
</dbReference>
<dbReference type="PRINTS" id="PR00024">
    <property type="entry name" value="HOMEOBOX"/>
</dbReference>
<dbReference type="PRINTS" id="PR00031">
    <property type="entry name" value="HTHREPRESSR"/>
</dbReference>
<dbReference type="SMART" id="SM00389">
    <property type="entry name" value="HOX"/>
    <property type="match status" value="1"/>
</dbReference>
<dbReference type="SUPFAM" id="SSF46689">
    <property type="entry name" value="Homeodomain-like"/>
    <property type="match status" value="1"/>
</dbReference>
<dbReference type="PROSITE" id="PS00033">
    <property type="entry name" value="ENGRAILED"/>
    <property type="match status" value="1"/>
</dbReference>
<dbReference type="PROSITE" id="PS00027">
    <property type="entry name" value="HOMEOBOX_1"/>
    <property type="match status" value="1"/>
</dbReference>
<dbReference type="PROSITE" id="PS50071">
    <property type="entry name" value="HOMEOBOX_2"/>
    <property type="match status" value="1"/>
</dbReference>